<gene>
    <name evidence="1" type="primary">hmuV</name>
    <name type="ordered locus">IL0115</name>
</gene>
<comment type="function">
    <text evidence="1">Part of the ABC transporter complex HmuTUV involved in hemin import. Responsible for energy coupling to the transport system.</text>
</comment>
<comment type="subunit">
    <text evidence="1">The complex is composed of two ATP-binding proteins (HmuV), two transmembrane proteins (HmuU) and a solute-binding protein (HmuT).</text>
</comment>
<comment type="subcellular location">
    <subcellularLocation>
        <location evidence="1">Cell inner membrane</location>
        <topology evidence="1">Peripheral membrane protein</topology>
    </subcellularLocation>
</comment>
<comment type="similarity">
    <text evidence="1">Belongs to the ABC transporter superfamily. Heme (hemin) importer (TC 3.A.1.14.5) family.</text>
</comment>
<evidence type="ECO:0000255" key="1">
    <source>
        <dbReference type="HAMAP-Rule" id="MF_01718"/>
    </source>
</evidence>
<keyword id="KW-0067">ATP-binding</keyword>
<keyword id="KW-0997">Cell inner membrane</keyword>
<keyword id="KW-1003">Cell membrane</keyword>
<keyword id="KW-0472">Membrane</keyword>
<keyword id="KW-0547">Nucleotide-binding</keyword>
<keyword id="KW-1185">Reference proteome</keyword>
<keyword id="KW-1278">Translocase</keyword>
<keyword id="KW-0813">Transport</keyword>
<proteinExistence type="inferred from homology"/>
<organism>
    <name type="scientific">Idiomarina loihiensis (strain ATCC BAA-735 / DSM 15497 / L2-TR)</name>
    <dbReference type="NCBI Taxonomy" id="283942"/>
    <lineage>
        <taxon>Bacteria</taxon>
        <taxon>Pseudomonadati</taxon>
        <taxon>Pseudomonadota</taxon>
        <taxon>Gammaproteobacteria</taxon>
        <taxon>Alteromonadales</taxon>
        <taxon>Idiomarinaceae</taxon>
        <taxon>Idiomarina</taxon>
    </lineage>
</organism>
<feature type="chain" id="PRO_0000269597" description="Hemin import ATP-binding protein HmuV">
    <location>
        <begin position="1"/>
        <end position="258"/>
    </location>
</feature>
<feature type="domain" description="ABC transporter" evidence="1">
    <location>
        <begin position="1"/>
        <end position="238"/>
    </location>
</feature>
<feature type="binding site" evidence="1">
    <location>
        <begin position="34"/>
        <end position="41"/>
    </location>
    <ligand>
        <name>ATP</name>
        <dbReference type="ChEBI" id="CHEBI:30616"/>
    </ligand>
</feature>
<dbReference type="EC" id="7.6.2.-" evidence="1"/>
<dbReference type="EMBL" id="AE017340">
    <property type="protein sequence ID" value="AAV80958.1"/>
    <property type="molecule type" value="Genomic_DNA"/>
</dbReference>
<dbReference type="RefSeq" id="WP_011233378.1">
    <property type="nucleotide sequence ID" value="NC_006512.1"/>
</dbReference>
<dbReference type="SMR" id="Q5QXD0"/>
<dbReference type="STRING" id="283942.IL0115"/>
<dbReference type="GeneID" id="41335261"/>
<dbReference type="KEGG" id="ilo:IL0115"/>
<dbReference type="eggNOG" id="COG4559">
    <property type="taxonomic scope" value="Bacteria"/>
</dbReference>
<dbReference type="HOGENOM" id="CLU_000604_1_11_6"/>
<dbReference type="OrthoDB" id="5292475at2"/>
<dbReference type="Proteomes" id="UP000001171">
    <property type="component" value="Chromosome"/>
</dbReference>
<dbReference type="GO" id="GO:0005886">
    <property type="term" value="C:plasma membrane"/>
    <property type="evidence" value="ECO:0007669"/>
    <property type="project" value="UniProtKB-SubCell"/>
</dbReference>
<dbReference type="GO" id="GO:0005524">
    <property type="term" value="F:ATP binding"/>
    <property type="evidence" value="ECO:0007669"/>
    <property type="project" value="UniProtKB-KW"/>
</dbReference>
<dbReference type="GO" id="GO:0016887">
    <property type="term" value="F:ATP hydrolysis activity"/>
    <property type="evidence" value="ECO:0007669"/>
    <property type="project" value="InterPro"/>
</dbReference>
<dbReference type="CDD" id="cd03214">
    <property type="entry name" value="ABC_Iron-Siderophores_B12_Hemin"/>
    <property type="match status" value="1"/>
</dbReference>
<dbReference type="Gene3D" id="3.40.50.300">
    <property type="entry name" value="P-loop containing nucleotide triphosphate hydrolases"/>
    <property type="match status" value="1"/>
</dbReference>
<dbReference type="InterPro" id="IPR003593">
    <property type="entry name" value="AAA+_ATPase"/>
</dbReference>
<dbReference type="InterPro" id="IPR003439">
    <property type="entry name" value="ABC_transporter-like_ATP-bd"/>
</dbReference>
<dbReference type="InterPro" id="IPR027417">
    <property type="entry name" value="P-loop_NTPase"/>
</dbReference>
<dbReference type="NCBIfam" id="NF010068">
    <property type="entry name" value="PRK13548.1"/>
    <property type="match status" value="1"/>
</dbReference>
<dbReference type="PANTHER" id="PTHR42794">
    <property type="entry name" value="HEMIN IMPORT ATP-BINDING PROTEIN HMUV"/>
    <property type="match status" value="1"/>
</dbReference>
<dbReference type="PANTHER" id="PTHR42794:SF1">
    <property type="entry name" value="HEMIN IMPORT ATP-BINDING PROTEIN HMUV"/>
    <property type="match status" value="1"/>
</dbReference>
<dbReference type="Pfam" id="PF00005">
    <property type="entry name" value="ABC_tran"/>
    <property type="match status" value="1"/>
</dbReference>
<dbReference type="SMART" id="SM00382">
    <property type="entry name" value="AAA"/>
    <property type="match status" value="1"/>
</dbReference>
<dbReference type="SUPFAM" id="SSF52540">
    <property type="entry name" value="P-loop containing nucleoside triphosphate hydrolases"/>
    <property type="match status" value="1"/>
</dbReference>
<dbReference type="PROSITE" id="PS50893">
    <property type="entry name" value="ABC_TRANSPORTER_2"/>
    <property type="match status" value="1"/>
</dbReference>
<dbReference type="PROSITE" id="PS51261">
    <property type="entry name" value="HMUV"/>
    <property type="match status" value="1"/>
</dbReference>
<reference key="1">
    <citation type="journal article" date="2004" name="Proc. Natl. Acad. Sci. U.S.A.">
        <title>Genome sequence of the deep-sea gamma-proteobacterium Idiomarina loihiensis reveals amino acid fermentation as a source of carbon and energy.</title>
        <authorList>
            <person name="Hou S."/>
            <person name="Saw J.H."/>
            <person name="Lee K.S."/>
            <person name="Freitas T.A."/>
            <person name="Belisle C."/>
            <person name="Kawarabayasi Y."/>
            <person name="Donachie S.P."/>
            <person name="Pikina A."/>
            <person name="Galperin M.Y."/>
            <person name="Koonin E.V."/>
            <person name="Makarova K.S."/>
            <person name="Omelchenko M.V."/>
            <person name="Sorokin A."/>
            <person name="Wolf Y.I."/>
            <person name="Li Q.X."/>
            <person name="Keum Y.S."/>
            <person name="Campbell S."/>
            <person name="Denery J."/>
            <person name="Aizawa S."/>
            <person name="Shibata S."/>
            <person name="Malahoff A."/>
            <person name="Alam M."/>
        </authorList>
    </citation>
    <scope>NUCLEOTIDE SEQUENCE [LARGE SCALE GENOMIC DNA]</scope>
    <source>
        <strain>ATCC BAA-735 / DSM 15497 / L2-TR</strain>
    </source>
</reference>
<name>HMUV_IDILO</name>
<protein>
    <recommendedName>
        <fullName evidence="1">Hemin import ATP-binding protein HmuV</fullName>
        <ecNumber evidence="1">7.6.2.-</ecNumber>
    </recommendedName>
</protein>
<sequence>MLDIDVSNLSIGRQQVLTSLNLSLEAHQFVAIVGENGAGKSTFLNMLAGELPYNGSIYLNGRELNSWDALKLAPIRAVMEQHQAAPEGLSVKELVAMGRYWSQESDADAEQRATQWLSRFDLTPMGERGIETLSGGEQQRAHLARCLCQLDKDLPGEQLLLLDEPTSALDVYHQHAVLHEIKSFSQKGNLVLSVMHDLNLASLYADQVIVLGNNCIQHVDSPESVFREDILERTYRTPVHVSSHPSFLKPMIFTEPRH</sequence>
<accession>Q5QXD0</accession>